<evidence type="ECO:0000255" key="1">
    <source>
        <dbReference type="HAMAP-Rule" id="MF_00382"/>
    </source>
</evidence>
<evidence type="ECO:0000305" key="2"/>
<keyword id="KW-0687">Ribonucleoprotein</keyword>
<keyword id="KW-0689">Ribosomal protein</keyword>
<keyword id="KW-0694">RNA-binding</keyword>
<keyword id="KW-0699">rRNA-binding</keyword>
<gene>
    <name evidence="1" type="primary">rplT</name>
    <name type="ordered locus">Csac_1771</name>
</gene>
<organism>
    <name type="scientific">Caldicellulosiruptor saccharolyticus (strain ATCC 43494 / DSM 8903 / Tp8T 6331)</name>
    <dbReference type="NCBI Taxonomy" id="351627"/>
    <lineage>
        <taxon>Bacteria</taxon>
        <taxon>Bacillati</taxon>
        <taxon>Bacillota</taxon>
        <taxon>Bacillota incertae sedis</taxon>
        <taxon>Caldicellulosiruptorales</taxon>
        <taxon>Caldicellulosiruptoraceae</taxon>
        <taxon>Caldicellulosiruptor</taxon>
    </lineage>
</organism>
<dbReference type="EMBL" id="CP000679">
    <property type="protein sequence ID" value="ABP67356.1"/>
    <property type="molecule type" value="Genomic_DNA"/>
</dbReference>
<dbReference type="RefSeq" id="WP_011917290.1">
    <property type="nucleotide sequence ID" value="NC_009437.1"/>
</dbReference>
<dbReference type="SMR" id="A4XKC1"/>
<dbReference type="STRING" id="351627.Csac_1771"/>
<dbReference type="KEGG" id="csc:Csac_1771"/>
<dbReference type="eggNOG" id="COG0292">
    <property type="taxonomic scope" value="Bacteria"/>
</dbReference>
<dbReference type="HOGENOM" id="CLU_123265_0_1_9"/>
<dbReference type="OrthoDB" id="9808966at2"/>
<dbReference type="Proteomes" id="UP000000256">
    <property type="component" value="Chromosome"/>
</dbReference>
<dbReference type="GO" id="GO:1990904">
    <property type="term" value="C:ribonucleoprotein complex"/>
    <property type="evidence" value="ECO:0007669"/>
    <property type="project" value="UniProtKB-KW"/>
</dbReference>
<dbReference type="GO" id="GO:0005840">
    <property type="term" value="C:ribosome"/>
    <property type="evidence" value="ECO:0007669"/>
    <property type="project" value="UniProtKB-KW"/>
</dbReference>
<dbReference type="GO" id="GO:0019843">
    <property type="term" value="F:rRNA binding"/>
    <property type="evidence" value="ECO:0007669"/>
    <property type="project" value="UniProtKB-UniRule"/>
</dbReference>
<dbReference type="GO" id="GO:0003735">
    <property type="term" value="F:structural constituent of ribosome"/>
    <property type="evidence" value="ECO:0007669"/>
    <property type="project" value="InterPro"/>
</dbReference>
<dbReference type="GO" id="GO:0000027">
    <property type="term" value="P:ribosomal large subunit assembly"/>
    <property type="evidence" value="ECO:0007669"/>
    <property type="project" value="UniProtKB-UniRule"/>
</dbReference>
<dbReference type="GO" id="GO:0006412">
    <property type="term" value="P:translation"/>
    <property type="evidence" value="ECO:0007669"/>
    <property type="project" value="InterPro"/>
</dbReference>
<dbReference type="CDD" id="cd07026">
    <property type="entry name" value="Ribosomal_L20"/>
    <property type="match status" value="1"/>
</dbReference>
<dbReference type="FunFam" id="1.10.1900.20:FF:000001">
    <property type="entry name" value="50S ribosomal protein L20"/>
    <property type="match status" value="1"/>
</dbReference>
<dbReference type="Gene3D" id="6.10.160.10">
    <property type="match status" value="1"/>
</dbReference>
<dbReference type="Gene3D" id="1.10.1900.20">
    <property type="entry name" value="Ribosomal protein L20"/>
    <property type="match status" value="1"/>
</dbReference>
<dbReference type="HAMAP" id="MF_00382">
    <property type="entry name" value="Ribosomal_bL20"/>
    <property type="match status" value="1"/>
</dbReference>
<dbReference type="InterPro" id="IPR005813">
    <property type="entry name" value="Ribosomal_bL20"/>
</dbReference>
<dbReference type="InterPro" id="IPR049946">
    <property type="entry name" value="RIBOSOMAL_L20_CS"/>
</dbReference>
<dbReference type="InterPro" id="IPR035566">
    <property type="entry name" value="Ribosomal_protein_bL20_C"/>
</dbReference>
<dbReference type="NCBIfam" id="TIGR01032">
    <property type="entry name" value="rplT_bact"/>
    <property type="match status" value="1"/>
</dbReference>
<dbReference type="PANTHER" id="PTHR10986">
    <property type="entry name" value="39S RIBOSOMAL PROTEIN L20"/>
    <property type="match status" value="1"/>
</dbReference>
<dbReference type="Pfam" id="PF00453">
    <property type="entry name" value="Ribosomal_L20"/>
    <property type="match status" value="1"/>
</dbReference>
<dbReference type="PRINTS" id="PR00062">
    <property type="entry name" value="RIBOSOMALL20"/>
</dbReference>
<dbReference type="SUPFAM" id="SSF74731">
    <property type="entry name" value="Ribosomal protein L20"/>
    <property type="match status" value="1"/>
</dbReference>
<dbReference type="PROSITE" id="PS00937">
    <property type="entry name" value="RIBOSOMAL_L20"/>
    <property type="match status" value="1"/>
</dbReference>
<protein>
    <recommendedName>
        <fullName evidence="1">Large ribosomal subunit protein bL20</fullName>
    </recommendedName>
    <alternativeName>
        <fullName evidence="2">50S ribosomal protein L20</fullName>
    </alternativeName>
</protein>
<comment type="function">
    <text evidence="1">Binds directly to 23S ribosomal RNA and is necessary for the in vitro assembly process of the 50S ribosomal subunit. It is not involved in the protein synthesizing functions of that subunit.</text>
</comment>
<comment type="similarity">
    <text evidence="1">Belongs to the bacterial ribosomal protein bL20 family.</text>
</comment>
<reference key="1">
    <citation type="submission" date="2007-04" db="EMBL/GenBank/DDBJ databases">
        <title>Genome sequence of the thermophilic hydrogen-producing bacterium Caldicellulosiruptor saccharolyticus DSM 8903.</title>
        <authorList>
            <person name="Copeland A."/>
            <person name="Lucas S."/>
            <person name="Lapidus A."/>
            <person name="Barry K."/>
            <person name="Detter J.C."/>
            <person name="Glavina del Rio T."/>
            <person name="Hammon N."/>
            <person name="Israni S."/>
            <person name="Dalin E."/>
            <person name="Tice H."/>
            <person name="Pitluck S."/>
            <person name="Kiss H."/>
            <person name="Brettin T."/>
            <person name="Bruce D."/>
            <person name="Han C."/>
            <person name="Schmutz J."/>
            <person name="Larimer F."/>
            <person name="Land M."/>
            <person name="Hauser L."/>
            <person name="Kyrpides N."/>
            <person name="Lykidis A."/>
            <person name="van de Werken H.J.G."/>
            <person name="Verhaart M.R.A."/>
            <person name="VanFossen A.L."/>
            <person name="Lewis D.L."/>
            <person name="Nichols J.D."/>
            <person name="Goorissen H.P."/>
            <person name="van Niel E.W.J."/>
            <person name="Stams F.J.M."/>
            <person name="Willquist K.U."/>
            <person name="Ward D.E."/>
            <person name="van der Oost J."/>
            <person name="Kelly R.M."/>
            <person name="Kengen S.M.W."/>
            <person name="Richardson P."/>
        </authorList>
    </citation>
    <scope>NUCLEOTIDE SEQUENCE [LARGE SCALE GENOMIC DNA]</scope>
    <source>
        <strain>ATCC 43494 / DSM 8903 / Tp8T 6331</strain>
    </source>
</reference>
<sequence>MRIKNGVWARKRHKKWLKLAKGYWGAKSRVFKQAHIAVMRSLRYAYIGRRLKKRDFRRLWITRINAAARQNGLSYSKFINGLKKAGISLNRKVLADMAINDQKAFAELVEIAKKQING</sequence>
<name>RL20_CALS8</name>
<proteinExistence type="inferred from homology"/>
<accession>A4XKC1</accession>
<feature type="chain" id="PRO_1000048946" description="Large ribosomal subunit protein bL20">
    <location>
        <begin position="1"/>
        <end position="118"/>
    </location>
</feature>